<comment type="function">
    <text>This is a larval (tadpole) alpha-globin.</text>
</comment>
<comment type="subunit">
    <text>Heterotetramer of two alpha chains and two beta chains.</text>
</comment>
<comment type="tissue specificity">
    <text>Red blood cells.</text>
</comment>
<comment type="similarity">
    <text evidence="1">Belongs to the globin family.</text>
</comment>
<evidence type="ECO:0000255" key="1">
    <source>
        <dbReference type="PROSITE-ProRule" id="PRU00238"/>
    </source>
</evidence>
<feature type="initiator methionine" description="Removed">
    <location>
        <position position="1"/>
    </location>
</feature>
<feature type="chain" id="PRO_0000052811" description="Hemoglobin subunit alpha-5">
    <location>
        <begin position="2"/>
        <end position="142"/>
    </location>
</feature>
<feature type="domain" description="Globin" evidence="1">
    <location>
        <begin position="2"/>
        <end position="142"/>
    </location>
</feature>
<feature type="binding site" evidence="1">
    <location>
        <position position="59"/>
    </location>
    <ligand>
        <name>O2</name>
        <dbReference type="ChEBI" id="CHEBI:15379"/>
    </ligand>
</feature>
<feature type="binding site" description="proximal binding residue" evidence="1">
    <location>
        <position position="88"/>
    </location>
    <ligand>
        <name>heme b</name>
        <dbReference type="ChEBI" id="CHEBI:60344"/>
    </ligand>
    <ligandPart>
        <name>Fe</name>
        <dbReference type="ChEBI" id="CHEBI:18248"/>
    </ligandPart>
</feature>
<organism>
    <name type="scientific">Xenopus laevis</name>
    <name type="common">African clawed frog</name>
    <dbReference type="NCBI Taxonomy" id="8355"/>
    <lineage>
        <taxon>Eukaryota</taxon>
        <taxon>Metazoa</taxon>
        <taxon>Chordata</taxon>
        <taxon>Craniata</taxon>
        <taxon>Vertebrata</taxon>
        <taxon>Euteleostomi</taxon>
        <taxon>Amphibia</taxon>
        <taxon>Batrachia</taxon>
        <taxon>Anura</taxon>
        <taxon>Pipoidea</taxon>
        <taxon>Pipidae</taxon>
        <taxon>Xenopodinae</taxon>
        <taxon>Xenopus</taxon>
        <taxon>Xenopus</taxon>
    </lineage>
</organism>
<dbReference type="EMBL" id="X02798">
    <property type="protein sequence ID" value="CAA26566.1"/>
    <property type="molecule type" value="mRNA"/>
</dbReference>
<dbReference type="EMBL" id="BC053818">
    <property type="protein sequence ID" value="AAH53818.1"/>
    <property type="molecule type" value="mRNA"/>
</dbReference>
<dbReference type="PIR" id="C24338">
    <property type="entry name" value="C24338"/>
</dbReference>
<dbReference type="RefSeq" id="NP_001079746.1">
    <property type="nucleotide sequence ID" value="NM_001086277.2"/>
</dbReference>
<dbReference type="SMR" id="P06638"/>
<dbReference type="DNASU" id="379435"/>
<dbReference type="GeneID" id="379435"/>
<dbReference type="KEGG" id="xla:379435"/>
<dbReference type="AGR" id="Xenbase:XB-GENE-973892"/>
<dbReference type="CTD" id="379435"/>
<dbReference type="Xenbase" id="XB-GENE-973892">
    <property type="gene designation" value="hba2.L"/>
</dbReference>
<dbReference type="OMA" id="FPCVITV"/>
<dbReference type="OrthoDB" id="8751793at2759"/>
<dbReference type="Proteomes" id="UP000186698">
    <property type="component" value="Chromosome 9_10L"/>
</dbReference>
<dbReference type="Bgee" id="379435">
    <property type="expression patterns" value="Expressed in internal ear and 7 other cell types or tissues"/>
</dbReference>
<dbReference type="GO" id="GO:0072562">
    <property type="term" value="C:blood microparticle"/>
    <property type="evidence" value="ECO:0007669"/>
    <property type="project" value="TreeGrafter"/>
</dbReference>
<dbReference type="GO" id="GO:0031838">
    <property type="term" value="C:haptoglobin-hemoglobin complex"/>
    <property type="evidence" value="ECO:0000318"/>
    <property type="project" value="GO_Central"/>
</dbReference>
<dbReference type="GO" id="GO:0005833">
    <property type="term" value="C:hemoglobin complex"/>
    <property type="evidence" value="ECO:0000318"/>
    <property type="project" value="GO_Central"/>
</dbReference>
<dbReference type="GO" id="GO:0031720">
    <property type="term" value="F:haptoglobin binding"/>
    <property type="evidence" value="ECO:0007669"/>
    <property type="project" value="TreeGrafter"/>
</dbReference>
<dbReference type="GO" id="GO:0020037">
    <property type="term" value="F:heme binding"/>
    <property type="evidence" value="ECO:0000318"/>
    <property type="project" value="GO_Central"/>
</dbReference>
<dbReference type="GO" id="GO:0005506">
    <property type="term" value="F:iron ion binding"/>
    <property type="evidence" value="ECO:0007669"/>
    <property type="project" value="InterPro"/>
</dbReference>
<dbReference type="GO" id="GO:0043177">
    <property type="term" value="F:organic acid binding"/>
    <property type="evidence" value="ECO:0007669"/>
    <property type="project" value="TreeGrafter"/>
</dbReference>
<dbReference type="GO" id="GO:0019825">
    <property type="term" value="F:oxygen binding"/>
    <property type="evidence" value="ECO:0000318"/>
    <property type="project" value="GO_Central"/>
</dbReference>
<dbReference type="GO" id="GO:0005344">
    <property type="term" value="F:oxygen carrier activity"/>
    <property type="evidence" value="ECO:0000318"/>
    <property type="project" value="GO_Central"/>
</dbReference>
<dbReference type="GO" id="GO:0004601">
    <property type="term" value="F:peroxidase activity"/>
    <property type="evidence" value="ECO:0007669"/>
    <property type="project" value="TreeGrafter"/>
</dbReference>
<dbReference type="GO" id="GO:0042744">
    <property type="term" value="P:hydrogen peroxide catabolic process"/>
    <property type="evidence" value="ECO:0000318"/>
    <property type="project" value="GO_Central"/>
</dbReference>
<dbReference type="CDD" id="cd08927">
    <property type="entry name" value="Hb-alpha-like"/>
    <property type="match status" value="1"/>
</dbReference>
<dbReference type="FunFam" id="1.10.490.10:FF:000002">
    <property type="entry name" value="Hemoglobin subunit alpha"/>
    <property type="match status" value="1"/>
</dbReference>
<dbReference type="Gene3D" id="1.10.490.10">
    <property type="entry name" value="Globins"/>
    <property type="match status" value="1"/>
</dbReference>
<dbReference type="InterPro" id="IPR000971">
    <property type="entry name" value="Globin"/>
</dbReference>
<dbReference type="InterPro" id="IPR009050">
    <property type="entry name" value="Globin-like_sf"/>
</dbReference>
<dbReference type="InterPro" id="IPR012292">
    <property type="entry name" value="Globin/Proto"/>
</dbReference>
<dbReference type="InterPro" id="IPR002338">
    <property type="entry name" value="Hemoglobin_a-typ"/>
</dbReference>
<dbReference type="InterPro" id="IPR050056">
    <property type="entry name" value="Hemoglobin_oxygen_transport"/>
</dbReference>
<dbReference type="InterPro" id="IPR002339">
    <property type="entry name" value="Hemoglobin_pi"/>
</dbReference>
<dbReference type="PANTHER" id="PTHR11442">
    <property type="entry name" value="HEMOGLOBIN FAMILY MEMBER"/>
    <property type="match status" value="1"/>
</dbReference>
<dbReference type="PANTHER" id="PTHR11442:SF41">
    <property type="entry name" value="HEMOGLOBIN SUBUNIT ZETA"/>
    <property type="match status" value="1"/>
</dbReference>
<dbReference type="Pfam" id="PF00042">
    <property type="entry name" value="Globin"/>
    <property type="match status" value="1"/>
</dbReference>
<dbReference type="PRINTS" id="PR00612">
    <property type="entry name" value="ALPHAHAEM"/>
</dbReference>
<dbReference type="PRINTS" id="PR00815">
    <property type="entry name" value="PIHAEM"/>
</dbReference>
<dbReference type="SUPFAM" id="SSF46458">
    <property type="entry name" value="Globin-like"/>
    <property type="match status" value="1"/>
</dbReference>
<dbReference type="PROSITE" id="PS01033">
    <property type="entry name" value="GLOBIN"/>
    <property type="match status" value="1"/>
</dbReference>
<proteinExistence type="evidence at transcript level"/>
<accession>P06638</accession>
<accession>Q5D090</accession>
<sequence>MTFSSAEKAAIASLWGKVSGHTDEIGAEALERLFLSYPQTKTYFSHFDLSHGSKDLRSHGGKVVKAIGNAATHIDDIPHALSALSDLHAFKLKVDPGNFKLLSHAIQVTLAIHFPAEFNADAQAAWDKFLAVVSAVLVSKYR</sequence>
<name>HBA5_XENLA</name>
<keyword id="KW-0349">Heme</keyword>
<keyword id="KW-0408">Iron</keyword>
<keyword id="KW-0479">Metal-binding</keyword>
<keyword id="KW-0561">Oxygen transport</keyword>
<keyword id="KW-1185">Reference proteome</keyword>
<keyword id="KW-0813">Transport</keyword>
<gene>
    <name type="primary">hba5</name>
</gene>
<protein>
    <recommendedName>
        <fullName>Hemoglobin subunit alpha-5</fullName>
    </recommendedName>
    <alternativeName>
        <fullName>Alpha-5-globin</fullName>
    </alternativeName>
    <alternativeName>
        <fullName>Alpha-T5</fullName>
    </alternativeName>
    <alternativeName>
        <fullName>Hemoglobin alpha-5 chain</fullName>
    </alternativeName>
</protein>
<reference key="1">
    <citation type="journal article" date="1985" name="Nucleic Acids Res.">
        <title>The pattern of expression of the Xenopus laevis tadpole alpha-globin genes and the amino acid sequence of the three major tadpole alpha-globin polypeptides.</title>
        <authorList>
            <person name="Banville D."/>
            <person name="Williams J.G."/>
        </authorList>
    </citation>
    <scope>NUCLEOTIDE SEQUENCE [MRNA]</scope>
</reference>
<reference key="2">
    <citation type="submission" date="2003-06" db="EMBL/GenBank/DDBJ databases">
        <authorList>
            <consortium name="NIH - Xenopus Gene Collection (XGC) project"/>
        </authorList>
    </citation>
    <scope>NUCLEOTIDE SEQUENCE [LARGE SCALE MRNA]</scope>
</reference>